<proteinExistence type="inferred from homology"/>
<reference key="1">
    <citation type="journal article" date="2007" name="J. Bacteriol.">
        <title>Genome sequence and analysis of the soil cellulolytic actinomycete Thermobifida fusca YX.</title>
        <authorList>
            <person name="Lykidis A."/>
            <person name="Mavromatis K."/>
            <person name="Ivanova N."/>
            <person name="Anderson I."/>
            <person name="Land M."/>
            <person name="DiBartolo G."/>
            <person name="Martinez M."/>
            <person name="Lapidus A."/>
            <person name="Lucas S."/>
            <person name="Copeland A."/>
            <person name="Richardson P."/>
            <person name="Wilson D.B."/>
            <person name="Kyrpides N."/>
        </authorList>
    </citation>
    <scope>NUCLEOTIDE SEQUENCE [LARGE SCALE GENOMIC DNA]</scope>
    <source>
        <strain>YX</strain>
    </source>
</reference>
<gene>
    <name evidence="1" type="primary">ispD</name>
    <name type="ordered locus">Tfu_2539</name>
</gene>
<comment type="function">
    <text evidence="1">Catalyzes the formation of 4-diphosphocytidyl-2-C-methyl-D-erythritol from CTP and 2-C-methyl-D-erythritol 4-phosphate (MEP).</text>
</comment>
<comment type="catalytic activity">
    <reaction evidence="1">
        <text>2-C-methyl-D-erythritol 4-phosphate + CTP + H(+) = 4-CDP-2-C-methyl-D-erythritol + diphosphate</text>
        <dbReference type="Rhea" id="RHEA:13429"/>
        <dbReference type="ChEBI" id="CHEBI:15378"/>
        <dbReference type="ChEBI" id="CHEBI:33019"/>
        <dbReference type="ChEBI" id="CHEBI:37563"/>
        <dbReference type="ChEBI" id="CHEBI:57823"/>
        <dbReference type="ChEBI" id="CHEBI:58262"/>
        <dbReference type="EC" id="2.7.7.60"/>
    </reaction>
</comment>
<comment type="pathway">
    <text evidence="1">Isoprenoid biosynthesis; isopentenyl diphosphate biosynthesis via DXP pathway; isopentenyl diphosphate from 1-deoxy-D-xylulose 5-phosphate: step 2/6.</text>
</comment>
<comment type="similarity">
    <text evidence="1">Belongs to the IspD/TarI cytidylyltransferase family. IspD subfamily.</text>
</comment>
<accession>Q47LV0</accession>
<name>ISPD_THEFY</name>
<feature type="chain" id="PRO_0000237833" description="2-C-methyl-D-erythritol 4-phosphate cytidylyltransferase">
    <location>
        <begin position="1"/>
        <end position="249"/>
    </location>
</feature>
<feature type="site" description="Transition state stabilizer" evidence="1">
    <location>
        <position position="25"/>
    </location>
</feature>
<feature type="site" description="Transition state stabilizer" evidence="1">
    <location>
        <position position="32"/>
    </location>
</feature>
<feature type="site" description="Positions MEP for the nucleophilic attack" evidence="1">
    <location>
        <position position="170"/>
    </location>
</feature>
<feature type="site" description="Positions MEP for the nucleophilic attack" evidence="1">
    <location>
        <position position="229"/>
    </location>
</feature>
<sequence length="249" mass="26230">MSLDQPAHRRPRVAAAVLAGGVGSRMGSAHPKQLLRLAGQTILERSVAALCAAPEVDEVVVVMNAAHLAEAEKILAEGRYDKVSRIVPGGASRSESSLAALQAVDDYDDNDLLLLHDAARPLVSGRTITACVTELTEVGAVGVAVPSSDTVVQVTLDASGREVIAAVPDRAALRRMQTPQGFRLGVIRRAYARAFAEPGFTATDDCGVVLRYLPEEPVRIVTGEESNIKVTHPSDLAVAEALLRTGVAQ</sequence>
<organism>
    <name type="scientific">Thermobifida fusca (strain YX)</name>
    <dbReference type="NCBI Taxonomy" id="269800"/>
    <lineage>
        <taxon>Bacteria</taxon>
        <taxon>Bacillati</taxon>
        <taxon>Actinomycetota</taxon>
        <taxon>Actinomycetes</taxon>
        <taxon>Streptosporangiales</taxon>
        <taxon>Nocardiopsidaceae</taxon>
        <taxon>Thermobifida</taxon>
    </lineage>
</organism>
<protein>
    <recommendedName>
        <fullName evidence="1">2-C-methyl-D-erythritol 4-phosphate cytidylyltransferase</fullName>
        <ecNumber evidence="1">2.7.7.60</ecNumber>
    </recommendedName>
    <alternativeName>
        <fullName evidence="1">4-diphosphocytidyl-2C-methyl-D-erythritol synthase</fullName>
    </alternativeName>
    <alternativeName>
        <fullName evidence="1">MEP cytidylyltransferase</fullName>
        <shortName evidence="1">MCT</shortName>
    </alternativeName>
</protein>
<keyword id="KW-0414">Isoprene biosynthesis</keyword>
<keyword id="KW-0548">Nucleotidyltransferase</keyword>
<keyword id="KW-0808">Transferase</keyword>
<evidence type="ECO:0000255" key="1">
    <source>
        <dbReference type="HAMAP-Rule" id="MF_00108"/>
    </source>
</evidence>
<dbReference type="EC" id="2.7.7.60" evidence="1"/>
<dbReference type="EMBL" id="CP000088">
    <property type="protein sequence ID" value="AAZ56572.1"/>
    <property type="molecule type" value="Genomic_DNA"/>
</dbReference>
<dbReference type="RefSeq" id="WP_011292962.1">
    <property type="nucleotide sequence ID" value="NC_007333.1"/>
</dbReference>
<dbReference type="SMR" id="Q47LV0"/>
<dbReference type="STRING" id="269800.Tfu_2539"/>
<dbReference type="KEGG" id="tfu:Tfu_2539"/>
<dbReference type="eggNOG" id="COG1211">
    <property type="taxonomic scope" value="Bacteria"/>
</dbReference>
<dbReference type="HOGENOM" id="CLU_061281_2_1_11"/>
<dbReference type="OrthoDB" id="9802561at2"/>
<dbReference type="UniPathway" id="UPA00056">
    <property type="reaction ID" value="UER00093"/>
</dbReference>
<dbReference type="GO" id="GO:0050518">
    <property type="term" value="F:2-C-methyl-D-erythritol 4-phosphate cytidylyltransferase activity"/>
    <property type="evidence" value="ECO:0007669"/>
    <property type="project" value="UniProtKB-UniRule"/>
</dbReference>
<dbReference type="GO" id="GO:0019288">
    <property type="term" value="P:isopentenyl diphosphate biosynthetic process, methylerythritol 4-phosphate pathway"/>
    <property type="evidence" value="ECO:0007669"/>
    <property type="project" value="UniProtKB-UniRule"/>
</dbReference>
<dbReference type="CDD" id="cd02516">
    <property type="entry name" value="CDP-ME_synthetase"/>
    <property type="match status" value="1"/>
</dbReference>
<dbReference type="FunFam" id="3.90.550.10:FF:000003">
    <property type="entry name" value="2-C-methyl-D-erythritol 4-phosphate cytidylyltransferase"/>
    <property type="match status" value="1"/>
</dbReference>
<dbReference type="Gene3D" id="3.90.550.10">
    <property type="entry name" value="Spore Coat Polysaccharide Biosynthesis Protein SpsA, Chain A"/>
    <property type="match status" value="1"/>
</dbReference>
<dbReference type="HAMAP" id="MF_00108">
    <property type="entry name" value="IspD"/>
    <property type="match status" value="1"/>
</dbReference>
<dbReference type="InterPro" id="IPR001228">
    <property type="entry name" value="IspD"/>
</dbReference>
<dbReference type="InterPro" id="IPR034683">
    <property type="entry name" value="IspD/TarI"/>
</dbReference>
<dbReference type="InterPro" id="IPR050088">
    <property type="entry name" value="IspD/TarI_cytidylyltransf_bact"/>
</dbReference>
<dbReference type="InterPro" id="IPR029044">
    <property type="entry name" value="Nucleotide-diphossugar_trans"/>
</dbReference>
<dbReference type="NCBIfam" id="TIGR00453">
    <property type="entry name" value="ispD"/>
    <property type="match status" value="1"/>
</dbReference>
<dbReference type="PANTHER" id="PTHR32125">
    <property type="entry name" value="2-C-METHYL-D-ERYTHRITOL 4-PHOSPHATE CYTIDYLYLTRANSFERASE, CHLOROPLASTIC"/>
    <property type="match status" value="1"/>
</dbReference>
<dbReference type="PANTHER" id="PTHR32125:SF4">
    <property type="entry name" value="2-C-METHYL-D-ERYTHRITOL 4-PHOSPHATE CYTIDYLYLTRANSFERASE, CHLOROPLASTIC"/>
    <property type="match status" value="1"/>
</dbReference>
<dbReference type="Pfam" id="PF01128">
    <property type="entry name" value="IspD"/>
    <property type="match status" value="1"/>
</dbReference>
<dbReference type="SUPFAM" id="SSF53448">
    <property type="entry name" value="Nucleotide-diphospho-sugar transferases"/>
    <property type="match status" value="1"/>
</dbReference>